<comment type="catalytic activity">
    <reaction>
        <text>L-glutamate 5-semialdehyde + NAD(+) + H2O = L-glutamate + NADH + 2 H(+)</text>
        <dbReference type="Rhea" id="RHEA:30235"/>
        <dbReference type="ChEBI" id="CHEBI:15377"/>
        <dbReference type="ChEBI" id="CHEBI:15378"/>
        <dbReference type="ChEBI" id="CHEBI:29985"/>
        <dbReference type="ChEBI" id="CHEBI:57540"/>
        <dbReference type="ChEBI" id="CHEBI:57945"/>
        <dbReference type="ChEBI" id="CHEBI:58066"/>
        <dbReference type="EC" id="1.2.1.88"/>
    </reaction>
</comment>
<comment type="pathway">
    <text>Amino-acid degradation; L-proline degradation into L-glutamate; L-glutamate from L-proline: step 2/2.</text>
</comment>
<comment type="similarity">
    <text evidence="5">Belongs to the aldehyde dehydrogenase family.</text>
</comment>
<proteinExistence type="evidence at protein level"/>
<keyword id="KW-0520">NAD</keyword>
<keyword id="KW-0560">Oxidoreductase</keyword>
<keyword id="KW-0597">Phosphoprotein</keyword>
<keyword id="KW-0642">Proline metabolism</keyword>
<keyword id="KW-1185">Reference proteome</keyword>
<gene>
    <name type="ORF">SPBC24C6.04</name>
</gene>
<dbReference type="EC" id="1.2.1.88"/>
<dbReference type="EMBL" id="CU329671">
    <property type="protein sequence ID" value="CAA21148.1"/>
    <property type="molecule type" value="Genomic_DNA"/>
</dbReference>
<dbReference type="EMBL" id="D89230">
    <property type="protein sequence ID" value="BAA13891.1"/>
    <property type="molecule type" value="mRNA"/>
</dbReference>
<dbReference type="PIR" id="T39968">
    <property type="entry name" value="T39968"/>
</dbReference>
<dbReference type="RefSeq" id="NP_595958.1">
    <property type="nucleotide sequence ID" value="NM_001021867.2"/>
</dbReference>
<dbReference type="SMR" id="O74766"/>
<dbReference type="BioGRID" id="276915">
    <property type="interactions" value="21"/>
</dbReference>
<dbReference type="FunCoup" id="O74766">
    <property type="interactions" value="202"/>
</dbReference>
<dbReference type="STRING" id="284812.O74766"/>
<dbReference type="iPTMnet" id="O74766"/>
<dbReference type="PaxDb" id="4896-SPBC24C6.04.1"/>
<dbReference type="EnsemblFungi" id="SPBC24C6.04.1">
    <property type="protein sequence ID" value="SPBC24C6.04.1:pep"/>
    <property type="gene ID" value="SPBC24C6.04"/>
</dbReference>
<dbReference type="PomBase" id="SPBC24C6.04"/>
<dbReference type="VEuPathDB" id="FungiDB:SPBC24C6.04"/>
<dbReference type="eggNOG" id="KOG2455">
    <property type="taxonomic scope" value="Eukaryota"/>
</dbReference>
<dbReference type="HOGENOM" id="CLU_005391_4_1_1"/>
<dbReference type="InParanoid" id="O74766"/>
<dbReference type="OMA" id="FAGIHFT"/>
<dbReference type="PhylomeDB" id="O74766"/>
<dbReference type="UniPathway" id="UPA00261">
    <property type="reaction ID" value="UER00374"/>
</dbReference>
<dbReference type="PRO" id="PR:O74766"/>
<dbReference type="Proteomes" id="UP000002485">
    <property type="component" value="Chromosome II"/>
</dbReference>
<dbReference type="GO" id="GO:0005829">
    <property type="term" value="C:cytosol"/>
    <property type="evidence" value="ECO:0007005"/>
    <property type="project" value="PomBase"/>
</dbReference>
<dbReference type="GO" id="GO:0005759">
    <property type="term" value="C:mitochondrial matrix"/>
    <property type="evidence" value="ECO:0000318"/>
    <property type="project" value="GO_Central"/>
</dbReference>
<dbReference type="GO" id="GO:0003842">
    <property type="term" value="F:1-pyrroline-5-carboxylate dehydrogenase activity"/>
    <property type="evidence" value="ECO:0000318"/>
    <property type="project" value="GO_Central"/>
</dbReference>
<dbReference type="GO" id="GO:0010133">
    <property type="term" value="P:proline catabolic process to glutamate"/>
    <property type="evidence" value="ECO:0000318"/>
    <property type="project" value="GO_Central"/>
</dbReference>
<dbReference type="CDD" id="cd07123">
    <property type="entry name" value="ALDH_F4-17_P5CDH"/>
    <property type="match status" value="1"/>
</dbReference>
<dbReference type="FunFam" id="3.40.605.10:FF:000006">
    <property type="entry name" value="1-pyrroline-5-carboxylate dehydrogenase"/>
    <property type="match status" value="1"/>
</dbReference>
<dbReference type="FunFam" id="3.40.309.10:FF:000005">
    <property type="entry name" value="1-pyrroline-5-carboxylate dehydrogenase 1"/>
    <property type="match status" value="1"/>
</dbReference>
<dbReference type="Gene3D" id="3.40.605.10">
    <property type="entry name" value="Aldehyde Dehydrogenase, Chain A, domain 1"/>
    <property type="match status" value="1"/>
</dbReference>
<dbReference type="Gene3D" id="3.40.309.10">
    <property type="entry name" value="Aldehyde Dehydrogenase, Chain A, domain 2"/>
    <property type="match status" value="1"/>
</dbReference>
<dbReference type="InterPro" id="IPR016161">
    <property type="entry name" value="Ald_DH/histidinol_DH"/>
</dbReference>
<dbReference type="InterPro" id="IPR016163">
    <property type="entry name" value="Ald_DH_C"/>
</dbReference>
<dbReference type="InterPro" id="IPR016160">
    <property type="entry name" value="Ald_DH_CS_CYS"/>
</dbReference>
<dbReference type="InterPro" id="IPR029510">
    <property type="entry name" value="Ald_DH_CS_GLU"/>
</dbReference>
<dbReference type="InterPro" id="IPR016162">
    <property type="entry name" value="Ald_DH_N"/>
</dbReference>
<dbReference type="InterPro" id="IPR015590">
    <property type="entry name" value="Aldehyde_DH_dom"/>
</dbReference>
<dbReference type="InterPro" id="IPR005931">
    <property type="entry name" value="P5CDH/ALDH4A1"/>
</dbReference>
<dbReference type="InterPro" id="IPR050485">
    <property type="entry name" value="Proline_metab_enzyme"/>
</dbReference>
<dbReference type="NCBIfam" id="TIGR01236">
    <property type="entry name" value="D1pyr5carbox1"/>
    <property type="match status" value="1"/>
</dbReference>
<dbReference type="PANTHER" id="PTHR42862">
    <property type="entry name" value="DELTA-1-PYRROLINE-5-CARBOXYLATE DEHYDROGENASE 1, ISOFORM A-RELATED"/>
    <property type="match status" value="1"/>
</dbReference>
<dbReference type="PANTHER" id="PTHR42862:SF1">
    <property type="entry name" value="DELTA-1-PYRROLINE-5-CARBOXYLATE DEHYDROGENASE 2, ISOFORM A-RELATED"/>
    <property type="match status" value="1"/>
</dbReference>
<dbReference type="Pfam" id="PF00171">
    <property type="entry name" value="Aldedh"/>
    <property type="match status" value="1"/>
</dbReference>
<dbReference type="SUPFAM" id="SSF53720">
    <property type="entry name" value="ALDH-like"/>
    <property type="match status" value="1"/>
</dbReference>
<dbReference type="PROSITE" id="PS00070">
    <property type="entry name" value="ALDEHYDE_DEHYDR_CYS"/>
    <property type="match status" value="1"/>
</dbReference>
<dbReference type="PROSITE" id="PS00687">
    <property type="entry name" value="ALDEHYDE_DEHYDR_GLU"/>
    <property type="match status" value="1"/>
</dbReference>
<organism>
    <name type="scientific">Schizosaccharomyces pombe (strain 972 / ATCC 24843)</name>
    <name type="common">Fission yeast</name>
    <dbReference type="NCBI Taxonomy" id="284812"/>
    <lineage>
        <taxon>Eukaryota</taxon>
        <taxon>Fungi</taxon>
        <taxon>Dikarya</taxon>
        <taxon>Ascomycota</taxon>
        <taxon>Taphrinomycotina</taxon>
        <taxon>Schizosaccharomycetes</taxon>
        <taxon>Schizosaccharomycetales</taxon>
        <taxon>Schizosaccharomycetaceae</taxon>
        <taxon>Schizosaccharomyces</taxon>
    </lineage>
</organism>
<sequence length="548" mass="60219">MSQFAEFKLPAIKNEPPKHYGPNSADREGIVKAYKELEAELPVTIPVIIDGKEVETNTIGEQRCPFEHKKVVARYHRAGAKHVEDAIEAALRGKKVWESLPFADRSAIFLKAAHLISTKYRYKLMAATMIGQGKNIWQAEIDAGMEIIDFLRFNTKYASELYASQPPENTPGVWNRMEYRPLEGFVYAITPFNFTAIAGNLAAAPLLMGNVVLMKPSDHAVLSSYIVYQIFREAGLPAGALQFIPGDAVEVSKVCFNHPEFAGLHFTGSTAVFRSLWGTIGENVANGKYRTYPKIVGETGGKNFHLVHSSAEIKSAVVNAVRAAFEYQGQKCSALSRLYVSKYAWENGFRDELTKQVKSLKVGAPLTDFANFVGPVIHQASFNKLKKVLESAASDSEIEVLAGGKADDSEGFFVEPTVLLSKNPKHDIFVNELFGPVLSVYVYEDDNLDAVCDLIDTTTPYGLTGSIFAQDRVVVRKLTDRLRNAAGNFYINDKCTGAVVGEQPFGGARASGTNDKAGSGMILSRFVSPRSIKDTFAYADSVLYPSNF</sequence>
<evidence type="ECO:0000250" key="1"/>
<evidence type="ECO:0000255" key="2">
    <source>
        <dbReference type="PROSITE-ProRule" id="PRU10007"/>
    </source>
</evidence>
<evidence type="ECO:0000255" key="3">
    <source>
        <dbReference type="PROSITE-ProRule" id="PRU10008"/>
    </source>
</evidence>
<evidence type="ECO:0000269" key="4">
    <source>
    </source>
</evidence>
<evidence type="ECO:0000305" key="5"/>
<accession>O74766</accession>
<accession>P78880</accession>
<reference key="1">
    <citation type="journal article" date="2002" name="Nature">
        <title>The genome sequence of Schizosaccharomyces pombe.</title>
        <authorList>
            <person name="Wood V."/>
            <person name="Gwilliam R."/>
            <person name="Rajandream M.A."/>
            <person name="Lyne M.H."/>
            <person name="Lyne R."/>
            <person name="Stewart A."/>
            <person name="Sgouros J.G."/>
            <person name="Peat N."/>
            <person name="Hayles J."/>
            <person name="Baker S.G."/>
            <person name="Basham D."/>
            <person name="Bowman S."/>
            <person name="Brooks K."/>
            <person name="Brown D."/>
            <person name="Brown S."/>
            <person name="Chillingworth T."/>
            <person name="Churcher C.M."/>
            <person name="Collins M."/>
            <person name="Connor R."/>
            <person name="Cronin A."/>
            <person name="Davis P."/>
            <person name="Feltwell T."/>
            <person name="Fraser A."/>
            <person name="Gentles S."/>
            <person name="Goble A."/>
            <person name="Hamlin N."/>
            <person name="Harris D.E."/>
            <person name="Hidalgo J."/>
            <person name="Hodgson G."/>
            <person name="Holroyd S."/>
            <person name="Hornsby T."/>
            <person name="Howarth S."/>
            <person name="Huckle E.J."/>
            <person name="Hunt S."/>
            <person name="Jagels K."/>
            <person name="James K.D."/>
            <person name="Jones L."/>
            <person name="Jones M."/>
            <person name="Leather S."/>
            <person name="McDonald S."/>
            <person name="McLean J."/>
            <person name="Mooney P."/>
            <person name="Moule S."/>
            <person name="Mungall K.L."/>
            <person name="Murphy L.D."/>
            <person name="Niblett D."/>
            <person name="Odell C."/>
            <person name="Oliver K."/>
            <person name="O'Neil S."/>
            <person name="Pearson D."/>
            <person name="Quail M.A."/>
            <person name="Rabbinowitsch E."/>
            <person name="Rutherford K.M."/>
            <person name="Rutter S."/>
            <person name="Saunders D."/>
            <person name="Seeger K."/>
            <person name="Sharp S."/>
            <person name="Skelton J."/>
            <person name="Simmonds M.N."/>
            <person name="Squares R."/>
            <person name="Squares S."/>
            <person name="Stevens K."/>
            <person name="Taylor K."/>
            <person name="Taylor R.G."/>
            <person name="Tivey A."/>
            <person name="Walsh S.V."/>
            <person name="Warren T."/>
            <person name="Whitehead S."/>
            <person name="Woodward J.R."/>
            <person name="Volckaert G."/>
            <person name="Aert R."/>
            <person name="Robben J."/>
            <person name="Grymonprez B."/>
            <person name="Weltjens I."/>
            <person name="Vanstreels E."/>
            <person name="Rieger M."/>
            <person name="Schaefer M."/>
            <person name="Mueller-Auer S."/>
            <person name="Gabel C."/>
            <person name="Fuchs M."/>
            <person name="Duesterhoeft A."/>
            <person name="Fritzc C."/>
            <person name="Holzer E."/>
            <person name="Moestl D."/>
            <person name="Hilbert H."/>
            <person name="Borzym K."/>
            <person name="Langer I."/>
            <person name="Beck A."/>
            <person name="Lehrach H."/>
            <person name="Reinhardt R."/>
            <person name="Pohl T.M."/>
            <person name="Eger P."/>
            <person name="Zimmermann W."/>
            <person name="Wedler H."/>
            <person name="Wambutt R."/>
            <person name="Purnelle B."/>
            <person name="Goffeau A."/>
            <person name="Cadieu E."/>
            <person name="Dreano S."/>
            <person name="Gloux S."/>
            <person name="Lelaure V."/>
            <person name="Mottier S."/>
            <person name="Galibert F."/>
            <person name="Aves S.J."/>
            <person name="Xiang Z."/>
            <person name="Hunt C."/>
            <person name="Moore K."/>
            <person name="Hurst S.M."/>
            <person name="Lucas M."/>
            <person name="Rochet M."/>
            <person name="Gaillardin C."/>
            <person name="Tallada V.A."/>
            <person name="Garzon A."/>
            <person name="Thode G."/>
            <person name="Daga R.R."/>
            <person name="Cruzado L."/>
            <person name="Jimenez J."/>
            <person name="Sanchez M."/>
            <person name="del Rey F."/>
            <person name="Benito J."/>
            <person name="Dominguez A."/>
            <person name="Revuelta J.L."/>
            <person name="Moreno S."/>
            <person name="Armstrong J."/>
            <person name="Forsburg S.L."/>
            <person name="Cerutti L."/>
            <person name="Lowe T."/>
            <person name="McCombie W.R."/>
            <person name="Paulsen I."/>
            <person name="Potashkin J."/>
            <person name="Shpakovski G.V."/>
            <person name="Ussery D."/>
            <person name="Barrell B.G."/>
            <person name="Nurse P."/>
        </authorList>
    </citation>
    <scope>NUCLEOTIDE SEQUENCE [LARGE SCALE GENOMIC DNA]</scope>
    <source>
        <strain>972 / ATCC 24843</strain>
    </source>
</reference>
<reference key="2">
    <citation type="journal article" date="1997" name="DNA Res.">
        <title>Identification of open reading frames in Schizosaccharomyces pombe cDNAs.</title>
        <authorList>
            <person name="Yoshioka S."/>
            <person name="Kato K."/>
            <person name="Nakai K."/>
            <person name="Okayama H."/>
            <person name="Nojima H."/>
        </authorList>
    </citation>
    <scope>NUCLEOTIDE SEQUENCE [LARGE SCALE MRNA] OF 189-548</scope>
    <source>
        <strain>PR745</strain>
    </source>
</reference>
<reference key="3">
    <citation type="journal article" date="2008" name="J. Proteome Res.">
        <title>Phosphoproteome analysis of fission yeast.</title>
        <authorList>
            <person name="Wilson-Grady J.T."/>
            <person name="Villen J."/>
            <person name="Gygi S.P."/>
        </authorList>
    </citation>
    <scope>PHOSPHORYLATION [LARGE SCALE ANALYSIS] AT SER-391; SER-394 AND SER-396</scope>
    <scope>IDENTIFICATION BY MASS SPECTROMETRY</scope>
</reference>
<feature type="chain" id="PRO_0000056502" description="Probable delta-1-pyrroline-5-carboxylate dehydrogenase">
    <location>
        <begin position="1"/>
        <end position="548"/>
    </location>
</feature>
<feature type="active site" description="Proton acceptor" evidence="2 3">
    <location>
        <position position="298"/>
    </location>
</feature>
<feature type="active site" description="Nucleophile" evidence="2 3">
    <location>
        <position position="332"/>
    </location>
</feature>
<feature type="site" description="Transition state stabilizer" evidence="1">
    <location>
        <position position="193"/>
    </location>
</feature>
<feature type="modified residue" description="Phosphoserine" evidence="4">
    <location>
        <position position="391"/>
    </location>
</feature>
<feature type="modified residue" description="Phosphoserine" evidence="4">
    <location>
        <position position="394"/>
    </location>
</feature>
<feature type="modified residue" description="Phosphoserine" evidence="4">
    <location>
        <position position="396"/>
    </location>
</feature>
<feature type="sequence conflict" description="In Ref. 2; BAA13891." evidence="5" ref="2">
    <original>N</original>
    <variation>K</variation>
    <location>
        <position position="210"/>
    </location>
</feature>
<feature type="sequence conflict" description="In Ref. 2; BAA13891." evidence="5" ref="2">
    <original>L</original>
    <variation>F</variation>
    <location>
        <position position="264"/>
    </location>
</feature>
<feature type="sequence conflict" description="In Ref. 2; BAA13891." evidence="5" ref="2">
    <original>FR</original>
    <variation>IC</variation>
    <location>
        <begin position="273"/>
        <end position="274"/>
    </location>
</feature>
<feature type="sequence conflict" description="In Ref. 2; BAA13891." evidence="5" ref="2">
    <original>K</original>
    <variation>N</variation>
    <location>
        <position position="294"/>
    </location>
</feature>
<feature type="sequence conflict" description="In Ref. 2; BAA13891." evidence="5" ref="2">
    <original>E</original>
    <variation>G</variation>
    <location>
        <position position="502"/>
    </location>
</feature>
<feature type="sequence conflict" description="In Ref. 2; BAA13891." evidence="5" ref="2">
    <original>K</original>
    <variation>E</variation>
    <location>
        <position position="516"/>
    </location>
</feature>
<feature type="sequence conflict" description="In Ref. 2; BAA13891." evidence="5" ref="2">
    <original>F</original>
    <variation>Y</variation>
    <location>
        <position position="526"/>
    </location>
</feature>
<feature type="sequence conflict" description="In Ref. 2; BAA13891." evidence="5" ref="2">
    <original>S</original>
    <variation>Y</variation>
    <location>
        <position position="531"/>
    </location>
</feature>
<feature type="sequence conflict" description="In Ref. 2; BAA13891." evidence="5" ref="2">
    <original>F</original>
    <variation>L</variation>
    <location>
        <position position="536"/>
    </location>
</feature>
<protein>
    <recommendedName>
        <fullName>Probable delta-1-pyrroline-5-carboxylate dehydrogenase</fullName>
        <shortName>P5C dehydrogenase</shortName>
        <ecNumber>1.2.1.88</ecNumber>
    </recommendedName>
    <alternativeName>
        <fullName>L-glutamate gamma-semialdehyde dehydrogenase</fullName>
    </alternativeName>
</protein>
<name>PUT2_SCHPO</name>